<sequence>MVHFTAEEKAIITSLWAKVNVEETGGEALGRLLVVYPWTQRFFDNFGNLSSASAIMGNPKVKAHGKKVLSSLGEAVTHMDDLKDAFAHLSELHCDRLHVDPENFRLLGNVLVIVLAHHFGREFTPQVQAAWKKLMSAVAIALGHKYH</sequence>
<keyword id="KW-0349">Heme</keyword>
<keyword id="KW-0408">Iron</keyword>
<keyword id="KW-0479">Metal-binding</keyword>
<keyword id="KW-0561">Oxygen transport</keyword>
<keyword id="KW-0813">Transport</keyword>
<reference key="1">
    <citation type="submission" date="1998-06" db="EMBL/GenBank/DDBJ databases">
        <title>Comparative nucleotide sequence evidence suggests that the single gamma globin gene in the prosimian primate Tarsius is an active gene.</title>
        <authorList>
            <person name="Meireles C.M."/>
            <person name="Czelusniak J."/>
            <person name="Goodman M."/>
        </authorList>
    </citation>
    <scope>NUCLEOTIDE SEQUENCE [GENOMIC DNA]</scope>
</reference>
<comment type="function">
    <text>Gamma chains make up the fetal hemoglobin F, in combination with alpha chains.</text>
</comment>
<comment type="subunit">
    <text>Heterotetramer of two alpha chains and two gamma chains in fetal hemoglobin (Hb F).</text>
</comment>
<comment type="tissue specificity">
    <text>Red blood cells.</text>
</comment>
<comment type="similarity">
    <text evidence="1">Belongs to the globin family.</text>
</comment>
<proteinExistence type="evidence at transcript level"/>
<organism>
    <name type="scientific">Cephalopachus bancanus</name>
    <name type="common">Western tarsier</name>
    <name type="synonym">Tarsius bancanus</name>
    <dbReference type="NCBI Taxonomy" id="9477"/>
    <lineage>
        <taxon>Eukaryota</taxon>
        <taxon>Metazoa</taxon>
        <taxon>Chordata</taxon>
        <taxon>Craniata</taxon>
        <taxon>Vertebrata</taxon>
        <taxon>Euteleostomi</taxon>
        <taxon>Mammalia</taxon>
        <taxon>Eutheria</taxon>
        <taxon>Euarchontoglires</taxon>
        <taxon>Primates</taxon>
        <taxon>Haplorrhini</taxon>
        <taxon>Tarsiiformes</taxon>
        <taxon>Tarsiidae</taxon>
        <taxon>Cephalopachus</taxon>
    </lineage>
</organism>
<gene>
    <name type="primary">HBG</name>
</gene>
<protein>
    <recommendedName>
        <fullName>Hemoglobin subunit gamma</fullName>
    </recommendedName>
    <alternativeName>
        <fullName>Gamma-globin</fullName>
    </alternativeName>
    <alternativeName>
        <fullName>Hemoglobin gamma chain</fullName>
    </alternativeName>
</protein>
<dbReference type="EMBL" id="AF072681">
    <property type="protein sequence ID" value="AAC25418.1"/>
    <property type="molecule type" value="Genomic_DNA"/>
</dbReference>
<dbReference type="SMR" id="O77655"/>
<dbReference type="GO" id="GO:0072562">
    <property type="term" value="C:blood microparticle"/>
    <property type="evidence" value="ECO:0007669"/>
    <property type="project" value="TreeGrafter"/>
</dbReference>
<dbReference type="GO" id="GO:0031838">
    <property type="term" value="C:haptoglobin-hemoglobin complex"/>
    <property type="evidence" value="ECO:0007669"/>
    <property type="project" value="TreeGrafter"/>
</dbReference>
<dbReference type="GO" id="GO:0005833">
    <property type="term" value="C:hemoglobin complex"/>
    <property type="evidence" value="ECO:0007669"/>
    <property type="project" value="InterPro"/>
</dbReference>
<dbReference type="GO" id="GO:0031720">
    <property type="term" value="F:haptoglobin binding"/>
    <property type="evidence" value="ECO:0007669"/>
    <property type="project" value="TreeGrafter"/>
</dbReference>
<dbReference type="GO" id="GO:0020037">
    <property type="term" value="F:heme binding"/>
    <property type="evidence" value="ECO:0007669"/>
    <property type="project" value="InterPro"/>
</dbReference>
<dbReference type="GO" id="GO:0031721">
    <property type="term" value="F:hemoglobin alpha binding"/>
    <property type="evidence" value="ECO:0007669"/>
    <property type="project" value="TreeGrafter"/>
</dbReference>
<dbReference type="GO" id="GO:0046872">
    <property type="term" value="F:metal ion binding"/>
    <property type="evidence" value="ECO:0007669"/>
    <property type="project" value="UniProtKB-KW"/>
</dbReference>
<dbReference type="GO" id="GO:0043177">
    <property type="term" value="F:organic acid binding"/>
    <property type="evidence" value="ECO:0007669"/>
    <property type="project" value="TreeGrafter"/>
</dbReference>
<dbReference type="GO" id="GO:0019825">
    <property type="term" value="F:oxygen binding"/>
    <property type="evidence" value="ECO:0007669"/>
    <property type="project" value="InterPro"/>
</dbReference>
<dbReference type="GO" id="GO:0005344">
    <property type="term" value="F:oxygen carrier activity"/>
    <property type="evidence" value="ECO:0007669"/>
    <property type="project" value="UniProtKB-KW"/>
</dbReference>
<dbReference type="GO" id="GO:0004601">
    <property type="term" value="F:peroxidase activity"/>
    <property type="evidence" value="ECO:0007669"/>
    <property type="project" value="TreeGrafter"/>
</dbReference>
<dbReference type="GO" id="GO:0042744">
    <property type="term" value="P:hydrogen peroxide catabolic process"/>
    <property type="evidence" value="ECO:0007669"/>
    <property type="project" value="TreeGrafter"/>
</dbReference>
<dbReference type="CDD" id="cd08925">
    <property type="entry name" value="Hb-beta-like"/>
    <property type="match status" value="1"/>
</dbReference>
<dbReference type="FunFam" id="1.10.490.10:FF:000001">
    <property type="entry name" value="Hemoglobin subunit beta"/>
    <property type="match status" value="1"/>
</dbReference>
<dbReference type="Gene3D" id="1.10.490.10">
    <property type="entry name" value="Globins"/>
    <property type="match status" value="1"/>
</dbReference>
<dbReference type="InterPro" id="IPR000971">
    <property type="entry name" value="Globin"/>
</dbReference>
<dbReference type="InterPro" id="IPR009050">
    <property type="entry name" value="Globin-like_sf"/>
</dbReference>
<dbReference type="InterPro" id="IPR012292">
    <property type="entry name" value="Globin/Proto"/>
</dbReference>
<dbReference type="InterPro" id="IPR002337">
    <property type="entry name" value="Hemoglobin_b"/>
</dbReference>
<dbReference type="InterPro" id="IPR050056">
    <property type="entry name" value="Hemoglobin_oxygen_transport"/>
</dbReference>
<dbReference type="PANTHER" id="PTHR11442">
    <property type="entry name" value="HEMOGLOBIN FAMILY MEMBER"/>
    <property type="match status" value="1"/>
</dbReference>
<dbReference type="PANTHER" id="PTHR11442:SF35">
    <property type="entry name" value="HEMOGLOBIN SUBUNIT EPSILON-2"/>
    <property type="match status" value="1"/>
</dbReference>
<dbReference type="Pfam" id="PF00042">
    <property type="entry name" value="Globin"/>
    <property type="match status" value="1"/>
</dbReference>
<dbReference type="PRINTS" id="PR00814">
    <property type="entry name" value="BETAHAEM"/>
</dbReference>
<dbReference type="SUPFAM" id="SSF46458">
    <property type="entry name" value="Globin-like"/>
    <property type="match status" value="1"/>
</dbReference>
<dbReference type="PROSITE" id="PS01033">
    <property type="entry name" value="GLOBIN"/>
    <property type="match status" value="1"/>
</dbReference>
<feature type="chain" id="PRO_0000053268" description="Hemoglobin subunit gamma">
    <location>
        <begin position="1"/>
        <end position="147"/>
    </location>
</feature>
<feature type="domain" description="Globin" evidence="1">
    <location>
        <begin position="3"/>
        <end position="147"/>
    </location>
</feature>
<feature type="binding site" description="distal binding residue" evidence="1">
    <location>
        <position position="64"/>
    </location>
    <ligand>
        <name>heme b</name>
        <dbReference type="ChEBI" id="CHEBI:60344"/>
    </ligand>
    <ligandPart>
        <name>Fe</name>
        <dbReference type="ChEBI" id="CHEBI:18248"/>
    </ligandPart>
</feature>
<feature type="binding site" description="proximal binding residue" evidence="1">
    <location>
        <position position="93"/>
    </location>
    <ligand>
        <name>heme b</name>
        <dbReference type="ChEBI" id="CHEBI:60344"/>
    </ligand>
    <ligandPart>
        <name>Fe</name>
        <dbReference type="ChEBI" id="CHEBI:18248"/>
    </ligandPart>
</feature>
<name>HBG_CEPBA</name>
<accession>O77655</accession>
<evidence type="ECO:0000255" key="1">
    <source>
        <dbReference type="PROSITE-ProRule" id="PRU00238"/>
    </source>
</evidence>